<organism>
    <name type="scientific">Merluccius bilinearis</name>
    <name type="common">Silver hake</name>
    <dbReference type="NCBI Taxonomy" id="79698"/>
    <lineage>
        <taxon>Eukaryota</taxon>
        <taxon>Metazoa</taxon>
        <taxon>Chordata</taxon>
        <taxon>Craniata</taxon>
        <taxon>Vertebrata</taxon>
        <taxon>Euteleostomi</taxon>
        <taxon>Actinopterygii</taxon>
        <taxon>Neopterygii</taxon>
        <taxon>Teleostei</taxon>
        <taxon>Neoteleostei</taxon>
        <taxon>Acanthomorphata</taxon>
        <taxon>Zeiogadaria</taxon>
        <taxon>Gadariae</taxon>
        <taxon>Gadiformes</taxon>
        <taxon>Gadoidei</taxon>
        <taxon>Merlucciidae</taxon>
        <taxon>Merluccius</taxon>
    </lineage>
</organism>
<protein>
    <recommendedName>
        <fullName>Parvalbumin beta</fullName>
    </recommendedName>
    <alternativeName>
        <fullName>Parvalbumin isoform B</fullName>
    </alternativeName>
</protein>
<keyword id="KW-0002">3D-structure</keyword>
<keyword id="KW-0007">Acetylation</keyword>
<keyword id="KW-0106">Calcium</keyword>
<keyword id="KW-0903">Direct protein sequencing</keyword>
<keyword id="KW-0479">Metal-binding</keyword>
<keyword id="KW-0514">Muscle protein</keyword>
<keyword id="KW-0677">Repeat</keyword>
<feature type="chain" id="PRO_0000073613" description="Parvalbumin beta">
    <location>
        <begin position="1"/>
        <end position="108"/>
    </location>
</feature>
<feature type="domain" description="EF-hand 1" evidence="2">
    <location>
        <begin position="38"/>
        <end position="73"/>
    </location>
</feature>
<feature type="domain" description="EF-hand 2" evidence="2">
    <location>
        <begin position="77"/>
        <end position="108"/>
    </location>
</feature>
<feature type="binding site" evidence="2">
    <location>
        <position position="51"/>
    </location>
    <ligand>
        <name>Ca(2+)</name>
        <dbReference type="ChEBI" id="CHEBI:29108"/>
        <label>1</label>
    </ligand>
</feature>
<feature type="binding site" evidence="2">
    <location>
        <position position="53"/>
    </location>
    <ligand>
        <name>Ca(2+)</name>
        <dbReference type="ChEBI" id="CHEBI:29108"/>
        <label>1</label>
    </ligand>
</feature>
<feature type="binding site" evidence="2">
    <location>
        <position position="55"/>
    </location>
    <ligand>
        <name>Ca(2+)</name>
        <dbReference type="ChEBI" id="CHEBI:29108"/>
        <label>1</label>
    </ligand>
</feature>
<feature type="binding site" evidence="1">
    <location>
        <position position="57"/>
    </location>
    <ligand>
        <name>Ca(2+)</name>
        <dbReference type="ChEBI" id="CHEBI:29108"/>
        <label>1</label>
    </ligand>
</feature>
<feature type="binding site" evidence="1">
    <location>
        <position position="59"/>
    </location>
    <ligand>
        <name>Ca(2+)</name>
        <dbReference type="ChEBI" id="CHEBI:29108"/>
        <label>1</label>
    </ligand>
</feature>
<feature type="binding site" evidence="2">
    <location>
        <position position="62"/>
    </location>
    <ligand>
        <name>Ca(2+)</name>
        <dbReference type="ChEBI" id="CHEBI:29108"/>
        <label>1</label>
    </ligand>
</feature>
<feature type="binding site" evidence="2">
    <location>
        <position position="90"/>
    </location>
    <ligand>
        <name>Ca(2+)</name>
        <dbReference type="ChEBI" id="CHEBI:29108"/>
        <label>2</label>
    </ligand>
</feature>
<feature type="binding site" evidence="2">
    <location>
        <position position="92"/>
    </location>
    <ligand>
        <name>Ca(2+)</name>
        <dbReference type="ChEBI" id="CHEBI:29108"/>
        <label>2</label>
    </ligand>
</feature>
<feature type="binding site" evidence="2">
    <location>
        <position position="94"/>
    </location>
    <ligand>
        <name>Ca(2+)</name>
        <dbReference type="ChEBI" id="CHEBI:29108"/>
        <label>2</label>
    </ligand>
</feature>
<feature type="binding site" evidence="1">
    <location>
        <position position="96"/>
    </location>
    <ligand>
        <name>Ca(2+)</name>
        <dbReference type="ChEBI" id="CHEBI:29108"/>
        <label>2</label>
    </ligand>
</feature>
<feature type="binding site" evidence="2">
    <location>
        <position position="101"/>
    </location>
    <ligand>
        <name>Ca(2+)</name>
        <dbReference type="ChEBI" id="CHEBI:29108"/>
        <label>2</label>
    </ligand>
</feature>
<feature type="modified residue" description="N-acetylalanine" evidence="5">
    <location>
        <position position="1"/>
    </location>
</feature>
<feature type="helix" evidence="6">
    <location>
        <begin position="8"/>
        <end position="17"/>
    </location>
</feature>
<feature type="helix" evidence="6">
    <location>
        <begin position="26"/>
        <end position="33"/>
    </location>
</feature>
<feature type="helix" evidence="6">
    <location>
        <begin position="35"/>
        <end position="37"/>
    </location>
</feature>
<feature type="helix" evidence="6">
    <location>
        <begin position="40"/>
        <end position="50"/>
    </location>
</feature>
<feature type="strand" evidence="6">
    <location>
        <begin position="55"/>
        <end position="59"/>
    </location>
</feature>
<feature type="helix" evidence="6">
    <location>
        <begin position="60"/>
        <end position="64"/>
    </location>
</feature>
<feature type="helix" evidence="6">
    <location>
        <begin position="66"/>
        <end position="70"/>
    </location>
</feature>
<feature type="helix" evidence="6">
    <location>
        <begin position="79"/>
        <end position="89"/>
    </location>
</feature>
<feature type="strand" evidence="6">
    <location>
        <begin position="94"/>
        <end position="97"/>
    </location>
</feature>
<feature type="helix" evidence="6">
    <location>
        <begin position="99"/>
        <end position="106"/>
    </location>
</feature>
<evidence type="ECO:0000250" key="1">
    <source>
        <dbReference type="UniProtKB" id="P02621"/>
    </source>
</evidence>
<evidence type="ECO:0000255" key="2">
    <source>
        <dbReference type="PROSITE-ProRule" id="PRU00448"/>
    </source>
</evidence>
<evidence type="ECO:0000269" key="3">
    <source>
    </source>
</evidence>
<evidence type="ECO:0000305" key="4"/>
<evidence type="ECO:0000305" key="5">
    <source>
    </source>
</evidence>
<evidence type="ECO:0007829" key="6">
    <source>
        <dbReference type="PDB" id="1BU3"/>
    </source>
</evidence>
<sequence>AFSGILADADVAAALKACEAADSFNYKAFFAKVGLTAKSADDIKKAFFVIDQDKSGFIEEDELKLFLQVFSAGARALTDAETKAFLKAGDSDGDGAIGVDEWAALVKA</sequence>
<accession>P56503</accession>
<reference key="1">
    <citation type="journal article" date="1997" name="Protein Sci.">
        <title>Characterization of a helix-loop-helix (EF hand) motif of silver hake parvalbumin isoform B.</title>
        <authorList>
            <person name="Revett S.P."/>
            <person name="King G."/>
            <person name="Shabanowitz J."/>
            <person name="Hunt D.F."/>
            <person name="Hartman T.M."/>
            <person name="Nelson D.J."/>
        </authorList>
    </citation>
    <scope>PROTEIN SEQUENCE</scope>
    <scope>ACETYLATION AT ALA-1</scope>
    <scope>MASS SPECTROMETRY</scope>
</reference>
<reference key="2">
    <citation type="journal article" date="2000" name="Protein Sci.">
        <title>X-Ray crystal structure and molecular dynamics simulations of silver hake parvalbumin (Isoform B).</title>
        <authorList>
            <person name="Richardson R.C."/>
            <person name="King N.M."/>
            <person name="Harrington D.J."/>
            <person name="Sun H."/>
            <person name="Royer W.E."/>
            <person name="Nelson D.J."/>
        </authorList>
    </citation>
    <scope>X-RAY CRYSTALLOGRAPHY (1.65 ANGSTROMS)</scope>
</reference>
<name>PRVB_MERBI</name>
<proteinExistence type="evidence at protein level"/>
<dbReference type="PDB" id="1BU3">
    <property type="method" value="X-ray"/>
    <property type="resolution" value="1.65 A"/>
    <property type="chains" value="A=1-108"/>
</dbReference>
<dbReference type="PDBsum" id="1BU3"/>
<dbReference type="SMR" id="P56503"/>
<dbReference type="iPTMnet" id="P56503"/>
<dbReference type="EvolutionaryTrace" id="P56503"/>
<dbReference type="GO" id="GO:0005737">
    <property type="term" value="C:cytoplasm"/>
    <property type="evidence" value="ECO:0007669"/>
    <property type="project" value="TreeGrafter"/>
</dbReference>
<dbReference type="GO" id="GO:0005509">
    <property type="term" value="F:calcium ion binding"/>
    <property type="evidence" value="ECO:0007669"/>
    <property type="project" value="InterPro"/>
</dbReference>
<dbReference type="CDD" id="cd16255">
    <property type="entry name" value="EFh_parvalbumin_beta"/>
    <property type="match status" value="1"/>
</dbReference>
<dbReference type="FunFam" id="1.10.238.10:FF:000060">
    <property type="entry name" value="Parvalbumin, thymic"/>
    <property type="match status" value="1"/>
</dbReference>
<dbReference type="Gene3D" id="1.10.238.10">
    <property type="entry name" value="EF-hand"/>
    <property type="match status" value="1"/>
</dbReference>
<dbReference type="InterPro" id="IPR011992">
    <property type="entry name" value="EF-hand-dom_pair"/>
</dbReference>
<dbReference type="InterPro" id="IPR018247">
    <property type="entry name" value="EF_Hand_1_Ca_BS"/>
</dbReference>
<dbReference type="InterPro" id="IPR002048">
    <property type="entry name" value="EF_hand_dom"/>
</dbReference>
<dbReference type="InterPro" id="IPR008080">
    <property type="entry name" value="Parvalbumin"/>
</dbReference>
<dbReference type="PANTHER" id="PTHR11653:SF12">
    <property type="entry name" value="PARVALBUMIN"/>
    <property type="match status" value="1"/>
</dbReference>
<dbReference type="PANTHER" id="PTHR11653">
    <property type="entry name" value="PARVALBUMIN ALPHA"/>
    <property type="match status" value="1"/>
</dbReference>
<dbReference type="Pfam" id="PF13499">
    <property type="entry name" value="EF-hand_7"/>
    <property type="match status" value="1"/>
</dbReference>
<dbReference type="PRINTS" id="PR01697">
    <property type="entry name" value="PARVALBUMIN"/>
</dbReference>
<dbReference type="SMART" id="SM00054">
    <property type="entry name" value="EFh"/>
    <property type="match status" value="2"/>
</dbReference>
<dbReference type="SUPFAM" id="SSF47473">
    <property type="entry name" value="EF-hand"/>
    <property type="match status" value="1"/>
</dbReference>
<dbReference type="PROSITE" id="PS00018">
    <property type="entry name" value="EF_HAND_1"/>
    <property type="match status" value="2"/>
</dbReference>
<dbReference type="PROSITE" id="PS50222">
    <property type="entry name" value="EF_HAND_2"/>
    <property type="match status" value="2"/>
</dbReference>
<comment type="function">
    <text>In muscle, parvalbumin is thought to be involved in relaxation after contraction. It binds two calcium ions.</text>
</comment>
<comment type="mass spectrometry"/>
<comment type="miscellaneous">
    <text>This parvalbumin has an isoelectric point of 4.2.</text>
</comment>
<comment type="similarity">
    <text evidence="4">Belongs to the parvalbumin family.</text>
</comment>